<reference key="1">
    <citation type="journal article" date="2005" name="Science">
        <title>The transcriptional landscape of the mammalian genome.</title>
        <authorList>
            <person name="Carninci P."/>
            <person name="Kasukawa T."/>
            <person name="Katayama S."/>
            <person name="Gough J."/>
            <person name="Frith M.C."/>
            <person name="Maeda N."/>
            <person name="Oyama R."/>
            <person name="Ravasi T."/>
            <person name="Lenhard B."/>
            <person name="Wells C."/>
            <person name="Kodzius R."/>
            <person name="Shimokawa K."/>
            <person name="Bajic V.B."/>
            <person name="Brenner S.E."/>
            <person name="Batalov S."/>
            <person name="Forrest A.R."/>
            <person name="Zavolan M."/>
            <person name="Davis M.J."/>
            <person name="Wilming L.G."/>
            <person name="Aidinis V."/>
            <person name="Allen J.E."/>
            <person name="Ambesi-Impiombato A."/>
            <person name="Apweiler R."/>
            <person name="Aturaliya R.N."/>
            <person name="Bailey T.L."/>
            <person name="Bansal M."/>
            <person name="Baxter L."/>
            <person name="Beisel K.W."/>
            <person name="Bersano T."/>
            <person name="Bono H."/>
            <person name="Chalk A.M."/>
            <person name="Chiu K.P."/>
            <person name="Choudhary V."/>
            <person name="Christoffels A."/>
            <person name="Clutterbuck D.R."/>
            <person name="Crowe M.L."/>
            <person name="Dalla E."/>
            <person name="Dalrymple B.P."/>
            <person name="de Bono B."/>
            <person name="Della Gatta G."/>
            <person name="di Bernardo D."/>
            <person name="Down T."/>
            <person name="Engstrom P."/>
            <person name="Fagiolini M."/>
            <person name="Faulkner G."/>
            <person name="Fletcher C.F."/>
            <person name="Fukushima T."/>
            <person name="Furuno M."/>
            <person name="Futaki S."/>
            <person name="Gariboldi M."/>
            <person name="Georgii-Hemming P."/>
            <person name="Gingeras T.R."/>
            <person name="Gojobori T."/>
            <person name="Green R.E."/>
            <person name="Gustincich S."/>
            <person name="Harbers M."/>
            <person name="Hayashi Y."/>
            <person name="Hensch T.K."/>
            <person name="Hirokawa N."/>
            <person name="Hill D."/>
            <person name="Huminiecki L."/>
            <person name="Iacono M."/>
            <person name="Ikeo K."/>
            <person name="Iwama A."/>
            <person name="Ishikawa T."/>
            <person name="Jakt M."/>
            <person name="Kanapin A."/>
            <person name="Katoh M."/>
            <person name="Kawasawa Y."/>
            <person name="Kelso J."/>
            <person name="Kitamura H."/>
            <person name="Kitano H."/>
            <person name="Kollias G."/>
            <person name="Krishnan S.P."/>
            <person name="Kruger A."/>
            <person name="Kummerfeld S.K."/>
            <person name="Kurochkin I.V."/>
            <person name="Lareau L.F."/>
            <person name="Lazarevic D."/>
            <person name="Lipovich L."/>
            <person name="Liu J."/>
            <person name="Liuni S."/>
            <person name="McWilliam S."/>
            <person name="Madan Babu M."/>
            <person name="Madera M."/>
            <person name="Marchionni L."/>
            <person name="Matsuda H."/>
            <person name="Matsuzawa S."/>
            <person name="Miki H."/>
            <person name="Mignone F."/>
            <person name="Miyake S."/>
            <person name="Morris K."/>
            <person name="Mottagui-Tabar S."/>
            <person name="Mulder N."/>
            <person name="Nakano N."/>
            <person name="Nakauchi H."/>
            <person name="Ng P."/>
            <person name="Nilsson R."/>
            <person name="Nishiguchi S."/>
            <person name="Nishikawa S."/>
            <person name="Nori F."/>
            <person name="Ohara O."/>
            <person name="Okazaki Y."/>
            <person name="Orlando V."/>
            <person name="Pang K.C."/>
            <person name="Pavan W.J."/>
            <person name="Pavesi G."/>
            <person name="Pesole G."/>
            <person name="Petrovsky N."/>
            <person name="Piazza S."/>
            <person name="Reed J."/>
            <person name="Reid J.F."/>
            <person name="Ring B.Z."/>
            <person name="Ringwald M."/>
            <person name="Rost B."/>
            <person name="Ruan Y."/>
            <person name="Salzberg S.L."/>
            <person name="Sandelin A."/>
            <person name="Schneider C."/>
            <person name="Schoenbach C."/>
            <person name="Sekiguchi K."/>
            <person name="Semple C.A."/>
            <person name="Seno S."/>
            <person name="Sessa L."/>
            <person name="Sheng Y."/>
            <person name="Shibata Y."/>
            <person name="Shimada H."/>
            <person name="Shimada K."/>
            <person name="Silva D."/>
            <person name="Sinclair B."/>
            <person name="Sperling S."/>
            <person name="Stupka E."/>
            <person name="Sugiura K."/>
            <person name="Sultana R."/>
            <person name="Takenaka Y."/>
            <person name="Taki K."/>
            <person name="Tammoja K."/>
            <person name="Tan S.L."/>
            <person name="Tang S."/>
            <person name="Taylor M.S."/>
            <person name="Tegner J."/>
            <person name="Teichmann S.A."/>
            <person name="Ueda H.R."/>
            <person name="van Nimwegen E."/>
            <person name="Verardo R."/>
            <person name="Wei C.L."/>
            <person name="Yagi K."/>
            <person name="Yamanishi H."/>
            <person name="Zabarovsky E."/>
            <person name="Zhu S."/>
            <person name="Zimmer A."/>
            <person name="Hide W."/>
            <person name="Bult C."/>
            <person name="Grimmond S.M."/>
            <person name="Teasdale R.D."/>
            <person name="Liu E.T."/>
            <person name="Brusic V."/>
            <person name="Quackenbush J."/>
            <person name="Wahlestedt C."/>
            <person name="Mattick J.S."/>
            <person name="Hume D.A."/>
            <person name="Kai C."/>
            <person name="Sasaki D."/>
            <person name="Tomaru Y."/>
            <person name="Fukuda S."/>
            <person name="Kanamori-Katayama M."/>
            <person name="Suzuki M."/>
            <person name="Aoki J."/>
            <person name="Arakawa T."/>
            <person name="Iida J."/>
            <person name="Imamura K."/>
            <person name="Itoh M."/>
            <person name="Kato T."/>
            <person name="Kawaji H."/>
            <person name="Kawagashira N."/>
            <person name="Kawashima T."/>
            <person name="Kojima M."/>
            <person name="Kondo S."/>
            <person name="Konno H."/>
            <person name="Nakano K."/>
            <person name="Ninomiya N."/>
            <person name="Nishio T."/>
            <person name="Okada M."/>
            <person name="Plessy C."/>
            <person name="Shibata K."/>
            <person name="Shiraki T."/>
            <person name="Suzuki S."/>
            <person name="Tagami M."/>
            <person name="Waki K."/>
            <person name="Watahiki A."/>
            <person name="Okamura-Oho Y."/>
            <person name="Suzuki H."/>
            <person name="Kawai J."/>
            <person name="Hayashizaki Y."/>
        </authorList>
    </citation>
    <scope>NUCLEOTIDE SEQUENCE [LARGE SCALE MRNA] (ISOFORMS 2 AND 4)</scope>
    <source>
        <strain>C57BL/6J</strain>
        <tissue>Hippocampus</tissue>
        <tissue>Pituitary</tissue>
    </source>
</reference>
<reference key="2">
    <citation type="journal article" date="2009" name="PLoS Biol.">
        <title>Lineage-specific biology revealed by a finished genome assembly of the mouse.</title>
        <authorList>
            <person name="Church D.M."/>
            <person name="Goodstadt L."/>
            <person name="Hillier L.W."/>
            <person name="Zody M.C."/>
            <person name="Goldstein S."/>
            <person name="She X."/>
            <person name="Bult C.J."/>
            <person name="Agarwala R."/>
            <person name="Cherry J.L."/>
            <person name="DiCuccio M."/>
            <person name="Hlavina W."/>
            <person name="Kapustin Y."/>
            <person name="Meric P."/>
            <person name="Maglott D."/>
            <person name="Birtle Z."/>
            <person name="Marques A.C."/>
            <person name="Graves T."/>
            <person name="Zhou S."/>
            <person name="Teague B."/>
            <person name="Potamousis K."/>
            <person name="Churas C."/>
            <person name="Place M."/>
            <person name="Herschleb J."/>
            <person name="Runnheim R."/>
            <person name="Forrest D."/>
            <person name="Amos-Landgraf J."/>
            <person name="Schwartz D.C."/>
            <person name="Cheng Z."/>
            <person name="Lindblad-Toh K."/>
            <person name="Eichler E.E."/>
            <person name="Ponting C.P."/>
        </authorList>
    </citation>
    <scope>NUCLEOTIDE SEQUENCE [LARGE SCALE GENOMIC DNA]</scope>
    <source>
        <strain>C57BL/6J</strain>
    </source>
</reference>
<reference key="3">
    <citation type="journal article" date="2004" name="Genome Res.">
        <title>The status, quality, and expansion of the NIH full-length cDNA project: the Mammalian Gene Collection (MGC).</title>
        <authorList>
            <consortium name="The MGC Project Team"/>
        </authorList>
    </citation>
    <scope>NUCLEOTIDE SEQUENCE [LARGE SCALE MRNA] (ISOFORM 1)</scope>
    <source>
        <strain>C57BL/6J</strain>
        <strain>FVB/N</strain>
        <tissue>Embryo</tissue>
        <tissue>Eye</tissue>
        <tissue>Liver</tissue>
    </source>
</reference>
<reference key="4">
    <citation type="submission" date="2005-02" db="EMBL/GenBank/DDBJ databases">
        <title>Prediction of the coding sequences of mouse homologues of KIAA gene. The complete nucleotide sequences of mouse KIAA-homologous cDNAs identified by screening of terminal sequences of cDNA clones randomly sampled from size-fractionated libraries.</title>
        <authorList>
            <person name="Okazaki N."/>
            <person name="Kikuno R.F."/>
            <person name="Ohara R."/>
            <person name="Inamoto S."/>
            <person name="Nagase T."/>
            <person name="Ohara O."/>
            <person name="Koga H."/>
        </authorList>
    </citation>
    <scope>NUCLEOTIDE SEQUENCE [LARGE SCALE MRNA] OF 308-829 (ISOFORM 3)</scope>
    <source>
        <tissue>Brain</tissue>
    </source>
</reference>
<reference key="5">
    <citation type="journal article" date="2010" name="Biochem. Biophys. Res. Commun.">
        <title>Fast kinase domain-containing protein 3 is a mitochondrial protein essential for cellular respiration.</title>
        <authorList>
            <person name="Simarro M."/>
            <person name="Gimenez-Cassina A."/>
            <person name="Kedersha N."/>
            <person name="Lazaro J.B."/>
            <person name="Adelmant G.O."/>
            <person name="Marto J.A."/>
            <person name="Rhee K."/>
            <person name="Tisdale S."/>
            <person name="Danial N."/>
            <person name="Benarafa C."/>
            <person name="Orduna A."/>
            <person name="Anderson P."/>
        </authorList>
    </citation>
    <scope>TISSUE SPECIFICITY</scope>
</reference>
<keyword id="KW-0007">Acetylation</keyword>
<keyword id="KW-0025">Alternative splicing</keyword>
<keyword id="KW-0496">Mitochondrion</keyword>
<keyword id="KW-1185">Reference proteome</keyword>
<keyword id="KW-0809">Transit peptide</keyword>
<dbReference type="EMBL" id="AK030411">
    <property type="protein sequence ID" value="BAC26950.1"/>
    <property type="molecule type" value="mRNA"/>
</dbReference>
<dbReference type="EMBL" id="AK083186">
    <property type="protein sequence ID" value="BAC38800.1"/>
    <property type="molecule type" value="mRNA"/>
</dbReference>
<dbReference type="EMBL" id="AL845261">
    <property type="status" value="NOT_ANNOTATED_CDS"/>
    <property type="molecule type" value="Genomic_DNA"/>
</dbReference>
<dbReference type="EMBL" id="BC023501">
    <property type="protein sequence ID" value="AAH23501.1"/>
    <property type="molecule type" value="mRNA"/>
</dbReference>
<dbReference type="EMBL" id="BC069943">
    <property type="protein sequence ID" value="AAH69943.1"/>
    <property type="molecule type" value="mRNA"/>
</dbReference>
<dbReference type="EMBL" id="BC075689">
    <property type="protein sequence ID" value="AAH75689.1"/>
    <property type="molecule type" value="mRNA"/>
</dbReference>
<dbReference type="EMBL" id="AK220423">
    <property type="protein sequence ID" value="BAD90468.1"/>
    <property type="molecule type" value="mRNA"/>
</dbReference>
<dbReference type="CCDS" id="CCDS16096.1">
    <molecule id="Q6DI86-1"/>
</dbReference>
<dbReference type="RefSeq" id="NP_796218.2">
    <molecule id="Q6DI86-1"/>
    <property type="nucleotide sequence ID" value="NM_177244.3"/>
</dbReference>
<dbReference type="SMR" id="Q6DI86"/>
<dbReference type="BioGRID" id="236243">
    <property type="interactions" value="4"/>
</dbReference>
<dbReference type="FunCoup" id="Q6DI86">
    <property type="interactions" value="1041"/>
</dbReference>
<dbReference type="STRING" id="10090.ENSMUSP00000072896"/>
<dbReference type="iPTMnet" id="Q6DI86"/>
<dbReference type="PhosphoSitePlus" id="Q6DI86"/>
<dbReference type="PaxDb" id="10090-ENSMUSP00000072896"/>
<dbReference type="ProteomicsDB" id="271723">
    <molecule id="Q6DI86-1"/>
</dbReference>
<dbReference type="ProteomicsDB" id="271724">
    <molecule id="Q6DI86-2"/>
</dbReference>
<dbReference type="ProteomicsDB" id="271725">
    <molecule id="Q6DI86-3"/>
</dbReference>
<dbReference type="Pumba" id="Q6DI86"/>
<dbReference type="Antibodypedia" id="33812">
    <property type="antibodies" value="132 antibodies from 22 providers"/>
</dbReference>
<dbReference type="DNASU" id="320720"/>
<dbReference type="Ensembl" id="ENSMUST00000073152.13">
    <molecule id="Q6DI86-1"/>
    <property type="protein sequence ID" value="ENSMUSP00000072896.7"/>
    <property type="gene ID" value="ENSMUSG00000027086.17"/>
</dbReference>
<dbReference type="Ensembl" id="ENSMUST00000102706.4">
    <molecule id="Q6DI86-3"/>
    <property type="protein sequence ID" value="ENSMUSP00000099767.4"/>
    <property type="gene ID" value="ENSMUSG00000027086.17"/>
</dbReference>
<dbReference type="GeneID" id="320720"/>
<dbReference type="KEGG" id="mmu:320720"/>
<dbReference type="UCSC" id="uc008jyh.1">
    <molecule id="Q6DI86-1"/>
    <property type="organism name" value="mouse"/>
</dbReference>
<dbReference type="UCSC" id="uc008jyi.1">
    <molecule id="Q6DI86-2"/>
    <property type="organism name" value="mouse"/>
</dbReference>
<dbReference type="UCSC" id="uc008jyj.1">
    <molecule id="Q6DI86-4"/>
    <property type="organism name" value="mouse"/>
</dbReference>
<dbReference type="UCSC" id="uc012bwq.1">
    <molecule id="Q6DI86-3"/>
    <property type="organism name" value="mouse"/>
</dbReference>
<dbReference type="AGR" id="MGI:2444596"/>
<dbReference type="CTD" id="79675"/>
<dbReference type="MGI" id="MGI:2444596">
    <property type="gene designation" value="Fastkd1"/>
</dbReference>
<dbReference type="VEuPathDB" id="HostDB:ENSMUSG00000027086"/>
<dbReference type="eggNOG" id="ENOG502QQ64">
    <property type="taxonomic scope" value="Eukaryota"/>
</dbReference>
<dbReference type="GeneTree" id="ENSGT01030000234607"/>
<dbReference type="HOGENOM" id="CLU_017819_0_0_1"/>
<dbReference type="InParanoid" id="Q6DI86"/>
<dbReference type="OMA" id="FRPFSCE"/>
<dbReference type="OrthoDB" id="385235at2759"/>
<dbReference type="PhylomeDB" id="Q6DI86"/>
<dbReference type="TreeFam" id="TF324885"/>
<dbReference type="BioGRID-ORCS" id="320720">
    <property type="hits" value="5 hits in 77 CRISPR screens"/>
</dbReference>
<dbReference type="ChiTaRS" id="Fastkd1">
    <property type="organism name" value="mouse"/>
</dbReference>
<dbReference type="PRO" id="PR:Q6DI86"/>
<dbReference type="Proteomes" id="UP000000589">
    <property type="component" value="Chromosome 2"/>
</dbReference>
<dbReference type="RNAct" id="Q6DI86">
    <property type="molecule type" value="protein"/>
</dbReference>
<dbReference type="Bgee" id="ENSMUSG00000027086">
    <property type="expression patterns" value="Expressed in interventricular septum and 249 other cell types or tissues"/>
</dbReference>
<dbReference type="GO" id="GO:0005739">
    <property type="term" value="C:mitochondrion"/>
    <property type="evidence" value="ECO:0000250"/>
    <property type="project" value="UniProtKB"/>
</dbReference>
<dbReference type="GO" id="GO:0005654">
    <property type="term" value="C:nucleoplasm"/>
    <property type="evidence" value="ECO:0007669"/>
    <property type="project" value="Ensembl"/>
</dbReference>
<dbReference type="GO" id="GO:0000959">
    <property type="term" value="P:mitochondrial RNA metabolic process"/>
    <property type="evidence" value="ECO:0000250"/>
    <property type="project" value="UniProtKB"/>
</dbReference>
<dbReference type="GO" id="GO:0044528">
    <property type="term" value="P:regulation of mitochondrial mRNA stability"/>
    <property type="evidence" value="ECO:0000250"/>
    <property type="project" value="UniProtKB"/>
</dbReference>
<dbReference type="InterPro" id="IPR013579">
    <property type="entry name" value="FAST_2"/>
</dbReference>
<dbReference type="InterPro" id="IPR050870">
    <property type="entry name" value="FAST_kinase"/>
</dbReference>
<dbReference type="InterPro" id="IPR010622">
    <property type="entry name" value="FAST_Leu-rich"/>
</dbReference>
<dbReference type="InterPro" id="IPR013584">
    <property type="entry name" value="RAP"/>
</dbReference>
<dbReference type="PANTHER" id="PTHR21228:SF29">
    <property type="entry name" value="FAST KINASE DOMAIN-CONTAINING PROTEIN 1, MITOCHONDRIAL"/>
    <property type="match status" value="1"/>
</dbReference>
<dbReference type="PANTHER" id="PTHR21228">
    <property type="entry name" value="FAST LEU-RICH DOMAIN-CONTAINING"/>
    <property type="match status" value="1"/>
</dbReference>
<dbReference type="Pfam" id="PF06743">
    <property type="entry name" value="FAST_1"/>
    <property type="match status" value="1"/>
</dbReference>
<dbReference type="Pfam" id="PF08368">
    <property type="entry name" value="FAST_2"/>
    <property type="match status" value="1"/>
</dbReference>
<dbReference type="Pfam" id="PF08373">
    <property type="entry name" value="RAP"/>
    <property type="match status" value="1"/>
</dbReference>
<dbReference type="SMART" id="SM00952">
    <property type="entry name" value="RAP"/>
    <property type="match status" value="1"/>
</dbReference>
<dbReference type="PROSITE" id="PS51286">
    <property type="entry name" value="RAP"/>
    <property type="match status" value="1"/>
</dbReference>
<protein>
    <recommendedName>
        <fullName>FAST kinase domain-containing protein 1, mitochondrial</fullName>
    </recommendedName>
</protein>
<accession>Q6DI86</accession>
<accession>A2AR00</accession>
<accession>B0R0D3</accession>
<accession>Q5DTU7</accession>
<accession>Q6IS39</accession>
<accession>Q8BSV8</accession>
<accession>Q8C429</accession>
<accession>Q8R1N6</accession>
<proteinExistence type="evidence at transcript level"/>
<feature type="transit peptide" description="Mitochondrion" evidence="6">
    <location>
        <begin position="1"/>
        <end status="unknown"/>
    </location>
</feature>
<feature type="chain" id="PRO_0000284711" description="FAST kinase domain-containing protein 1, mitochondrial">
    <location>
        <begin status="unknown"/>
        <end position="829"/>
    </location>
</feature>
<feature type="domain" description="RAP" evidence="2">
    <location>
        <begin position="761"/>
        <end position="821"/>
    </location>
</feature>
<feature type="modified residue" description="N6-acetyllysine" evidence="1">
    <location>
        <position position="346"/>
    </location>
</feature>
<feature type="splice variant" id="VSP_024618" description="In isoform 4." evidence="4">
    <original>FDTNVLSIFSTCLADQHLYFSPLMG</original>
    <variation>QVCWACHRRSGLFCGRLSRWNIGKE</variation>
    <location>
        <begin position="136"/>
        <end position="160"/>
    </location>
</feature>
<feature type="splice variant" id="VSP_024619" description="In isoform 4." evidence="4">
    <location>
        <begin position="161"/>
        <end position="829"/>
    </location>
</feature>
<feature type="splice variant" id="VSP_024620" description="In isoform 2." evidence="4">
    <location>
        <begin position="348"/>
        <end position="829"/>
    </location>
</feature>
<feature type="splice variant" id="VSP_024621" description="In isoform 3." evidence="5">
    <location>
        <begin position="524"/>
        <end position="552"/>
    </location>
</feature>
<feature type="sequence conflict" description="In Ref. 1; BAC26950." evidence="6" ref="1">
    <original>C</original>
    <variation>W</variation>
    <location>
        <position position="56"/>
    </location>
</feature>
<feature type="sequence conflict" description="In Ref. 1; BAC26950." evidence="6" ref="1">
    <original>K</original>
    <variation>N</variation>
    <location>
        <position position="73"/>
    </location>
</feature>
<feature type="sequence conflict" description="In Ref. 1; BAC38800." evidence="6" ref="1">
    <original>L</original>
    <variation>I</variation>
    <location>
        <position position="121"/>
    </location>
</feature>
<feature type="sequence conflict" description="In Ref. 4; BAD90468." evidence="6" ref="4">
    <original>Y</original>
    <variation>C</variation>
    <location>
        <position position="443"/>
    </location>
</feature>
<feature type="sequence conflict" description="In Ref. 4; BAD90468." evidence="6" ref="4">
    <original>Q</original>
    <variation>H</variation>
    <location>
        <position position="471"/>
    </location>
</feature>
<gene>
    <name type="primary">Fastkd1</name>
    <name type="synonym">Kiaa1800</name>
</gene>
<comment type="function">
    <text evidence="1">Involved in the down-regulation of mitochondrial MT-ND3 mRNA levels which leads to decreased respiratory complex I abundance and activity.</text>
</comment>
<comment type="subcellular location">
    <subcellularLocation>
        <location evidence="1">Mitochondrion</location>
    </subcellularLocation>
    <text evidence="1">Preferentially localizes to mitochondrial RNA granules, platforms for post-transcriptional RNA modification and ribosome assembly.</text>
</comment>
<comment type="alternative products">
    <event type="alternative splicing"/>
    <isoform>
        <id>Q6DI86-1</id>
        <name>1</name>
        <sequence type="displayed"/>
    </isoform>
    <isoform>
        <id>Q6DI86-2</id>
        <name>2</name>
        <sequence type="described" ref="VSP_024620"/>
    </isoform>
    <isoform>
        <id>Q6DI86-3</id>
        <name>3</name>
        <sequence type="described" ref="VSP_024621"/>
    </isoform>
    <isoform>
        <id>Q6DI86-4</id>
        <name>4</name>
        <sequence type="described" ref="VSP_024618 VSP_024619"/>
    </isoform>
</comment>
<comment type="tissue specificity">
    <text evidence="3">Expression detected in spleen, testis, colon, heart, smooth muscle, kidney, brain, lung, liver, brown and white adipose tissue with highest expression in heart and brown adipose tissue.</text>
</comment>
<comment type="domain">
    <text evidence="1">The RAP domain is essential to regulate MT-ND3 mRNA levels.</text>
</comment>
<comment type="similarity">
    <text evidence="6">Belongs to the FAST kinase family.</text>
</comment>
<evidence type="ECO:0000250" key="1">
    <source>
        <dbReference type="UniProtKB" id="Q53R41"/>
    </source>
</evidence>
<evidence type="ECO:0000255" key="2">
    <source>
        <dbReference type="PROSITE-ProRule" id="PRU00619"/>
    </source>
</evidence>
<evidence type="ECO:0000269" key="3">
    <source>
    </source>
</evidence>
<evidence type="ECO:0000303" key="4">
    <source>
    </source>
</evidence>
<evidence type="ECO:0000303" key="5">
    <source ref="4"/>
</evidence>
<evidence type="ECO:0000305" key="6"/>
<name>FAKD1_MOUSE</name>
<sequence length="829" mass="95398">MFRLRSISLLSWRAFPLRPFSCESLITQMQKCTNEEQVFDLIETNTATLSEQQVGCAFNVLWQFQKQKTVLEKNVDHVRNHPQFLTLCSITTNHIPAMSDATLVDVLYSIKQFAVESHHPLIEALVTEAWKRLERFDTNVLSIFSTCLADQHLYFSPLMGKIADIVNRRLETIQDLRALSVLMVSISSLISPCFQERLVIRTELLFDTVNSSKVNIARRILLFLRNVKYSHYPLLERCNQVFIRNMSHLDLESISKILNLYQFLQFHSFEFVEAARGRLAEMTLPSDHPESFVRLFAALGPVARPEIKKQLKSTILLLSEELSSQQALIVLGAMEDMESRNSHLLKKIVSVLYKHLDNYKSIELLKIIQALTFLHFQSKELFMKLRELLLSRLEASVIPSEISVLVSALSMLPHPHLSETAVSRIEAVLPQCDFRELNDLVVYLMRWIQSDLVCLASTTGKQLDLLQKLDQLGRHRLQQSTNLDLLWEELKSLKGEWLHESLVEESIAALLRFMDEIDYSNIAKVASFLSRTNYLNTLLLDRIASVAIQQVEKIHPFSVLAIILPFSILNYDPPQKDEFFGACVQCCNSYLGTLDPGTLVFLGFSLAVLEYFPEDLLKKMFNIEFLARLDSQLEILPSSLSARIQFRLMELNRAVCLECPELQVPWFHDRFCQRQFNKDTGVMNGAQQQIYKMLAEVLGGHQCVKPSALSPYYHTVGFECILDKRKKPLPYESHSIAPRKSLGMHWDSRVEPRLPPEAERIAIELLDVRAFCSNIPHLKGKSAMKKRHLEILGYRVIQIPYFEWNSMAMSTKDARMDYLREHLFGEGKS</sequence>
<organism>
    <name type="scientific">Mus musculus</name>
    <name type="common">Mouse</name>
    <dbReference type="NCBI Taxonomy" id="10090"/>
    <lineage>
        <taxon>Eukaryota</taxon>
        <taxon>Metazoa</taxon>
        <taxon>Chordata</taxon>
        <taxon>Craniata</taxon>
        <taxon>Vertebrata</taxon>
        <taxon>Euteleostomi</taxon>
        <taxon>Mammalia</taxon>
        <taxon>Eutheria</taxon>
        <taxon>Euarchontoglires</taxon>
        <taxon>Glires</taxon>
        <taxon>Rodentia</taxon>
        <taxon>Myomorpha</taxon>
        <taxon>Muroidea</taxon>
        <taxon>Muridae</taxon>
        <taxon>Murinae</taxon>
        <taxon>Mus</taxon>
        <taxon>Mus</taxon>
    </lineage>
</organism>